<evidence type="ECO:0000255" key="1">
    <source>
        <dbReference type="HAMAP-Rule" id="MF_00050"/>
    </source>
</evidence>
<protein>
    <recommendedName>
        <fullName evidence="1">Elongation factor Ts</fullName>
        <shortName evidence="1">EF-Ts</shortName>
    </recommendedName>
</protein>
<name>EFTS_ECO24</name>
<proteinExistence type="inferred from homology"/>
<gene>
    <name evidence="1" type="primary">tsf</name>
    <name type="ordered locus">EcE24377A_0174</name>
</gene>
<sequence length="283" mass="30423">MAEITASLVKELRERTGAGMMDCKKALTEANGDIELAIENMRKSGAIKAAKKAGNVAADGVIKTKIDGNYGIILEVNCQTDFVAKDAGFQAFADKVLDAAVAGKITDVEVLKAQFEEERVALVAKIGENINIRRVAALEGDVLGSYQHGARIGVLVAAKGADEELVKHIAMHVAASKPEFIKPEDVSAEVVEKEYQVQLDIAMQSGKPKEIAEKMVEGRMKKFTGEVSLTGQPFVMEPSKTVGQLLKEHNAEVTGFIRFEVGEGIEKVETDFAAEVAAMSKQS</sequence>
<organism>
    <name type="scientific">Escherichia coli O139:H28 (strain E24377A / ETEC)</name>
    <dbReference type="NCBI Taxonomy" id="331111"/>
    <lineage>
        <taxon>Bacteria</taxon>
        <taxon>Pseudomonadati</taxon>
        <taxon>Pseudomonadota</taxon>
        <taxon>Gammaproteobacteria</taxon>
        <taxon>Enterobacterales</taxon>
        <taxon>Enterobacteriaceae</taxon>
        <taxon>Escherichia</taxon>
    </lineage>
</organism>
<reference key="1">
    <citation type="journal article" date="2008" name="J. Bacteriol.">
        <title>The pangenome structure of Escherichia coli: comparative genomic analysis of E. coli commensal and pathogenic isolates.</title>
        <authorList>
            <person name="Rasko D.A."/>
            <person name="Rosovitz M.J."/>
            <person name="Myers G.S.A."/>
            <person name="Mongodin E.F."/>
            <person name="Fricke W.F."/>
            <person name="Gajer P."/>
            <person name="Crabtree J."/>
            <person name="Sebaihia M."/>
            <person name="Thomson N.R."/>
            <person name="Chaudhuri R."/>
            <person name="Henderson I.R."/>
            <person name="Sperandio V."/>
            <person name="Ravel J."/>
        </authorList>
    </citation>
    <scope>NUCLEOTIDE SEQUENCE [LARGE SCALE GENOMIC DNA]</scope>
    <source>
        <strain>E24377A / ETEC</strain>
    </source>
</reference>
<accession>A7ZHR0</accession>
<keyword id="KW-0963">Cytoplasm</keyword>
<keyword id="KW-0251">Elongation factor</keyword>
<keyword id="KW-0648">Protein biosynthesis</keyword>
<keyword id="KW-1185">Reference proteome</keyword>
<dbReference type="EMBL" id="CP000800">
    <property type="protein sequence ID" value="ABV20338.1"/>
    <property type="molecule type" value="Genomic_DNA"/>
</dbReference>
<dbReference type="RefSeq" id="WP_000818114.1">
    <property type="nucleotide sequence ID" value="NC_009801.1"/>
</dbReference>
<dbReference type="SMR" id="A7ZHR0"/>
<dbReference type="GeneID" id="93777255"/>
<dbReference type="KEGG" id="ecw:EcE24377A_0174"/>
<dbReference type="HOGENOM" id="CLU_047155_0_2_6"/>
<dbReference type="Proteomes" id="UP000001122">
    <property type="component" value="Chromosome"/>
</dbReference>
<dbReference type="GO" id="GO:0005737">
    <property type="term" value="C:cytoplasm"/>
    <property type="evidence" value="ECO:0007669"/>
    <property type="project" value="UniProtKB-SubCell"/>
</dbReference>
<dbReference type="GO" id="GO:0003746">
    <property type="term" value="F:translation elongation factor activity"/>
    <property type="evidence" value="ECO:0007669"/>
    <property type="project" value="UniProtKB-UniRule"/>
</dbReference>
<dbReference type="CDD" id="cd14275">
    <property type="entry name" value="UBA_EF-Ts"/>
    <property type="match status" value="1"/>
</dbReference>
<dbReference type="FunFam" id="1.10.286.20:FF:000001">
    <property type="entry name" value="Elongation factor Ts"/>
    <property type="match status" value="1"/>
</dbReference>
<dbReference type="FunFam" id="1.10.8.10:FF:000001">
    <property type="entry name" value="Elongation factor Ts"/>
    <property type="match status" value="1"/>
</dbReference>
<dbReference type="FunFam" id="3.30.479.20:FF:000001">
    <property type="entry name" value="Elongation factor Ts"/>
    <property type="match status" value="1"/>
</dbReference>
<dbReference type="Gene3D" id="1.10.286.20">
    <property type="match status" value="1"/>
</dbReference>
<dbReference type="Gene3D" id="1.10.8.10">
    <property type="entry name" value="DNA helicase RuvA subunit, C-terminal domain"/>
    <property type="match status" value="1"/>
</dbReference>
<dbReference type="Gene3D" id="3.30.479.20">
    <property type="entry name" value="Elongation factor Ts, dimerisation domain"/>
    <property type="match status" value="2"/>
</dbReference>
<dbReference type="HAMAP" id="MF_00050">
    <property type="entry name" value="EF_Ts"/>
    <property type="match status" value="1"/>
</dbReference>
<dbReference type="InterPro" id="IPR036402">
    <property type="entry name" value="EF-Ts_dimer_sf"/>
</dbReference>
<dbReference type="InterPro" id="IPR001816">
    <property type="entry name" value="Transl_elong_EFTs/EF1B"/>
</dbReference>
<dbReference type="InterPro" id="IPR014039">
    <property type="entry name" value="Transl_elong_EFTs/EF1B_dimer"/>
</dbReference>
<dbReference type="InterPro" id="IPR018101">
    <property type="entry name" value="Transl_elong_Ts_CS"/>
</dbReference>
<dbReference type="InterPro" id="IPR009060">
    <property type="entry name" value="UBA-like_sf"/>
</dbReference>
<dbReference type="NCBIfam" id="TIGR00116">
    <property type="entry name" value="tsf"/>
    <property type="match status" value="1"/>
</dbReference>
<dbReference type="PANTHER" id="PTHR11741">
    <property type="entry name" value="ELONGATION FACTOR TS"/>
    <property type="match status" value="1"/>
</dbReference>
<dbReference type="PANTHER" id="PTHR11741:SF0">
    <property type="entry name" value="ELONGATION FACTOR TS, MITOCHONDRIAL"/>
    <property type="match status" value="1"/>
</dbReference>
<dbReference type="Pfam" id="PF00889">
    <property type="entry name" value="EF_TS"/>
    <property type="match status" value="1"/>
</dbReference>
<dbReference type="SUPFAM" id="SSF54713">
    <property type="entry name" value="Elongation factor Ts (EF-Ts), dimerisation domain"/>
    <property type="match status" value="2"/>
</dbReference>
<dbReference type="SUPFAM" id="SSF46934">
    <property type="entry name" value="UBA-like"/>
    <property type="match status" value="1"/>
</dbReference>
<dbReference type="PROSITE" id="PS01126">
    <property type="entry name" value="EF_TS_1"/>
    <property type="match status" value="1"/>
</dbReference>
<dbReference type="PROSITE" id="PS01127">
    <property type="entry name" value="EF_TS_2"/>
    <property type="match status" value="1"/>
</dbReference>
<comment type="function">
    <text evidence="1">Associates with the EF-Tu.GDP complex and induces the exchange of GDP to GTP. It remains bound to the aminoacyl-tRNA.EF-Tu.GTP complex up to the GTP hydrolysis stage on the ribosome.</text>
</comment>
<comment type="subcellular location">
    <subcellularLocation>
        <location evidence="1">Cytoplasm</location>
    </subcellularLocation>
</comment>
<comment type="similarity">
    <text evidence="1">Belongs to the EF-Ts family.</text>
</comment>
<feature type="chain" id="PRO_1000057352" description="Elongation factor Ts">
    <location>
        <begin position="1"/>
        <end position="283"/>
    </location>
</feature>
<feature type="region of interest" description="Involved in Mg(2+) ion dislocation from EF-Tu" evidence="1">
    <location>
        <begin position="80"/>
        <end position="83"/>
    </location>
</feature>